<protein>
    <recommendedName>
        <fullName evidence="1">Pyrophosphate--fructose 6-phosphate 1-phosphotransferase</fullName>
        <ecNumber evidence="1">2.7.1.90</ecNumber>
    </recommendedName>
    <alternativeName>
        <fullName evidence="1">6-phosphofructokinase, pyrophosphate dependent</fullName>
    </alternativeName>
    <alternativeName>
        <fullName evidence="1">PPi-dependent phosphofructokinase</fullName>
        <shortName evidence="1">PPi-PFK</shortName>
    </alternativeName>
    <alternativeName>
        <fullName evidence="1">Pyrophosphate-dependent 6-phosphofructose-1-kinase</fullName>
    </alternativeName>
</protein>
<dbReference type="EC" id="2.7.1.90" evidence="1"/>
<dbReference type="EMBL" id="AE017282">
    <property type="protein sequence ID" value="AAU92465.1"/>
    <property type="molecule type" value="Genomic_DNA"/>
</dbReference>
<dbReference type="RefSeq" id="WP_010960534.1">
    <property type="nucleotide sequence ID" value="NC_002977.6"/>
</dbReference>
<dbReference type="SMR" id="Q609I3"/>
<dbReference type="STRING" id="243233.MCA1251"/>
<dbReference type="GeneID" id="88223536"/>
<dbReference type="KEGG" id="mca:MCA1251"/>
<dbReference type="eggNOG" id="COG0205">
    <property type="taxonomic scope" value="Bacteria"/>
</dbReference>
<dbReference type="HOGENOM" id="CLU_020655_1_1_6"/>
<dbReference type="UniPathway" id="UPA00109">
    <property type="reaction ID" value="UER00182"/>
</dbReference>
<dbReference type="Proteomes" id="UP000006821">
    <property type="component" value="Chromosome"/>
</dbReference>
<dbReference type="GO" id="GO:0005737">
    <property type="term" value="C:cytoplasm"/>
    <property type="evidence" value="ECO:0007669"/>
    <property type="project" value="UniProtKB-SubCell"/>
</dbReference>
<dbReference type="GO" id="GO:0003872">
    <property type="term" value="F:6-phosphofructokinase activity"/>
    <property type="evidence" value="ECO:0007669"/>
    <property type="project" value="UniProtKB-UniRule"/>
</dbReference>
<dbReference type="GO" id="GO:0047334">
    <property type="term" value="F:diphosphate-fructose-6-phosphate 1-phosphotransferase activity"/>
    <property type="evidence" value="ECO:0007669"/>
    <property type="project" value="UniProtKB-EC"/>
</dbReference>
<dbReference type="GO" id="GO:0046872">
    <property type="term" value="F:metal ion binding"/>
    <property type="evidence" value="ECO:0007669"/>
    <property type="project" value="UniProtKB-KW"/>
</dbReference>
<dbReference type="GO" id="GO:0006002">
    <property type="term" value="P:fructose 6-phosphate metabolic process"/>
    <property type="evidence" value="ECO:0007669"/>
    <property type="project" value="InterPro"/>
</dbReference>
<dbReference type="Gene3D" id="3.40.50.450">
    <property type="match status" value="1"/>
</dbReference>
<dbReference type="Gene3D" id="3.40.50.460">
    <property type="entry name" value="Phosphofructokinase domain"/>
    <property type="match status" value="1"/>
</dbReference>
<dbReference type="HAMAP" id="MF_01978">
    <property type="entry name" value="Phosphofructokinase_II_B2"/>
    <property type="match status" value="1"/>
</dbReference>
<dbReference type="InterPro" id="IPR022953">
    <property type="entry name" value="ATP_PFK"/>
</dbReference>
<dbReference type="InterPro" id="IPR050929">
    <property type="entry name" value="PFKA"/>
</dbReference>
<dbReference type="InterPro" id="IPR000023">
    <property type="entry name" value="Phosphofructokinase_dom"/>
</dbReference>
<dbReference type="InterPro" id="IPR035966">
    <property type="entry name" value="PKF_sf"/>
</dbReference>
<dbReference type="InterPro" id="IPR011404">
    <property type="entry name" value="PPi-PFK"/>
</dbReference>
<dbReference type="NCBIfam" id="NF010675">
    <property type="entry name" value="PRK14072.1"/>
    <property type="match status" value="1"/>
</dbReference>
<dbReference type="PANTHER" id="PTHR45770">
    <property type="entry name" value="ATP-DEPENDENT 6-PHOSPHOFRUCTOKINASE 1"/>
    <property type="match status" value="1"/>
</dbReference>
<dbReference type="Pfam" id="PF00365">
    <property type="entry name" value="PFK"/>
    <property type="match status" value="1"/>
</dbReference>
<dbReference type="PIRSF" id="PIRSF036483">
    <property type="entry name" value="PFK_XF0274"/>
    <property type="match status" value="1"/>
</dbReference>
<dbReference type="PRINTS" id="PR00476">
    <property type="entry name" value="PHFRCTKINASE"/>
</dbReference>
<dbReference type="SUPFAM" id="SSF53784">
    <property type="entry name" value="Phosphofructokinase"/>
    <property type="match status" value="1"/>
</dbReference>
<reference key="1">
    <citation type="journal article" date="2004" name="PLoS Biol.">
        <title>Genomic insights into methanotrophy: the complete genome sequence of Methylococcus capsulatus (Bath).</title>
        <authorList>
            <person name="Ward N.L."/>
            <person name="Larsen O."/>
            <person name="Sakwa J."/>
            <person name="Bruseth L."/>
            <person name="Khouri H.M."/>
            <person name="Durkin A.S."/>
            <person name="Dimitrov G."/>
            <person name="Jiang L."/>
            <person name="Scanlan D."/>
            <person name="Kang K.H."/>
            <person name="Lewis M.R."/>
            <person name="Nelson K.E."/>
            <person name="Methe B.A."/>
            <person name="Wu M."/>
            <person name="Heidelberg J.F."/>
            <person name="Paulsen I.T."/>
            <person name="Fouts D.E."/>
            <person name="Ravel J."/>
            <person name="Tettelin H."/>
            <person name="Ren Q."/>
            <person name="Read T.D."/>
            <person name="DeBoy R.T."/>
            <person name="Seshadri R."/>
            <person name="Salzberg S.L."/>
            <person name="Jensen H.B."/>
            <person name="Birkeland N.K."/>
            <person name="Nelson W.C."/>
            <person name="Dodson R.J."/>
            <person name="Grindhaug S.H."/>
            <person name="Holt I.E."/>
            <person name="Eidhammer I."/>
            <person name="Jonasen I."/>
            <person name="Vanaken S."/>
            <person name="Utterback T.R."/>
            <person name="Feldblyum T.V."/>
            <person name="Fraser C.M."/>
            <person name="Lillehaug J.R."/>
            <person name="Eisen J.A."/>
        </authorList>
    </citation>
    <scope>NUCLEOTIDE SEQUENCE [LARGE SCALE GENOMIC DNA]</scope>
    <source>
        <strain>ATCC 33009 / NCIMB 11132 / Bath</strain>
    </source>
</reference>
<reference key="2">
    <citation type="journal article" date="2008" name="FEMS Microbiol. Lett.">
        <title>Characterization of the pyrophosphate-dependent 6-phosphofructokinase from Methylococcus capsulatus Bath.</title>
        <authorList>
            <person name="Reshetnikov A.S."/>
            <person name="Rozova O.N."/>
            <person name="Khmelenina V.N."/>
            <person name="Mustakhimov I.I."/>
            <person name="Beschastny A.P."/>
            <person name="Murrell J.C."/>
            <person name="Trotsenko Y.A."/>
        </authorList>
    </citation>
    <scope>FUNCTION</scope>
    <scope>CATALYTIC ACTIVITY</scope>
    <scope>BIOPHYSICOCHEMICAL PROPERTIES</scope>
    <scope>SUBUNIT</scope>
    <scope>COFACTOR</scope>
    <source>
        <strain>ATCC 33009 / NCIMB 11132 / Bath</strain>
    </source>
</reference>
<accession>Q609I3</accession>
<keyword id="KW-0963">Cytoplasm</keyword>
<keyword id="KW-0324">Glycolysis</keyword>
<keyword id="KW-0418">Kinase</keyword>
<keyword id="KW-0460">Magnesium</keyword>
<keyword id="KW-0479">Metal-binding</keyword>
<keyword id="KW-1185">Reference proteome</keyword>
<keyword id="KW-0808">Transferase</keyword>
<organism>
    <name type="scientific">Methylococcus capsulatus (strain ATCC 33009 / NCIMB 11132 / Bath)</name>
    <dbReference type="NCBI Taxonomy" id="243233"/>
    <lineage>
        <taxon>Bacteria</taxon>
        <taxon>Pseudomonadati</taxon>
        <taxon>Pseudomonadota</taxon>
        <taxon>Gammaproteobacteria</taxon>
        <taxon>Methylococcales</taxon>
        <taxon>Methylococcaceae</taxon>
        <taxon>Methylococcus</taxon>
    </lineage>
</organism>
<gene>
    <name evidence="1" type="primary">pfp</name>
    <name type="ordered locus">MCA1251</name>
</gene>
<comment type="function">
    <text evidence="1 2">Catalyzes the phosphorylation of D-fructose 6-phosphate, the first committing step of glycolysis. Uses inorganic phosphate (PPi) as phosphoryl donor instead of ATP like common ATP-dependent phosphofructokinases (ATP-PFKs), which renders the reaction reversible, and can thus function both in glycolysis and gluconeogenesis. Consistently, PPi-PFK can replace the enzymes of both the forward (ATP-PFK) and reverse (fructose-bisphosphatase (FBPase)) reactions.</text>
</comment>
<comment type="catalytic activity">
    <reaction evidence="1 2">
        <text>beta-D-fructose 6-phosphate + diphosphate = beta-D-fructose 1,6-bisphosphate + phosphate + H(+)</text>
        <dbReference type="Rhea" id="RHEA:13613"/>
        <dbReference type="ChEBI" id="CHEBI:15378"/>
        <dbReference type="ChEBI" id="CHEBI:32966"/>
        <dbReference type="ChEBI" id="CHEBI:33019"/>
        <dbReference type="ChEBI" id="CHEBI:43474"/>
        <dbReference type="ChEBI" id="CHEBI:57634"/>
        <dbReference type="EC" id="2.7.1.90"/>
    </reaction>
</comment>
<comment type="cofactor">
    <cofactor evidence="1 2">
        <name>Mg(2+)</name>
        <dbReference type="ChEBI" id="CHEBI:18420"/>
    </cofactor>
    <cofactor evidence="1 2">
        <name>Co(2+)</name>
        <dbReference type="ChEBI" id="CHEBI:48828"/>
    </cofactor>
    <cofactor evidence="1 2">
        <name>Mn(2+)</name>
        <dbReference type="ChEBI" id="CHEBI:29035"/>
    </cofactor>
</comment>
<comment type="activity regulation">
    <text evidence="1">Non-allosteric.</text>
</comment>
<comment type="biophysicochemical properties">
    <kinetics>
        <KM evidence="2">8.69 mM for phosphate</KM>
        <KM evidence="2">0.027 mM for diphosphate</KM>
        <KM evidence="2">2.27 mM for fructose 6-phosphate</KM>
        <KM evidence="2">0.328 mM for fructose 1,6-bisphosphate</KM>
        <KM evidence="2">0.03 mM for sedoheptulose-7-phosphate</KM>
        <Vmax evidence="2">7.6 umol/min/mg enzyme for the forward reaction with fructose 6-phosphate as substrate</Vmax>
        <Vmax evidence="2">31.0 umol/min/mg enzyme for the forward reaction with sedoheptulose-7-phosphate as substrate</Vmax>
        <Vmax evidence="2">9.0 umol/min/mg enzyme for the reverse reaction with fructose 1,6-bisphosphate as substrate</Vmax>
    </kinetics>
    <phDependence>
        <text evidence="2">Optimum pH is 7.0.</text>
    </phDependence>
    <temperatureDependence>
        <text evidence="2">Optimum temperature is 30 degrees Celsius.</text>
    </temperatureDependence>
</comment>
<comment type="pathway">
    <text evidence="1">Carbohydrate degradation; glycolysis; D-glyceraldehyde 3-phosphate and glycerone phosphate from D-glucose: step 3/4.</text>
</comment>
<comment type="subunit">
    <text evidence="1 2">Homodimer.</text>
</comment>
<comment type="subcellular location">
    <subcellularLocation>
        <location evidence="1">Cytoplasm</location>
    </subcellularLocation>
</comment>
<comment type="similarity">
    <text evidence="1">Belongs to the phosphofructokinase type A (PFKA) family. PPi-dependent PFK group II subfamily. Clade 'B2' sub-subfamily.</text>
</comment>
<feature type="chain" id="PRO_0000429697" description="Pyrophosphate--fructose 6-phosphate 1-phosphotransferase">
    <location>
        <begin position="1"/>
        <end position="420"/>
    </location>
</feature>
<feature type="active site" description="Proton acceptor" evidence="1">
    <location>
        <position position="144"/>
    </location>
</feature>
<feature type="binding site" evidence="1">
    <location>
        <position position="13"/>
    </location>
    <ligand>
        <name>diphosphate</name>
        <dbReference type="ChEBI" id="CHEBI:33019"/>
    </ligand>
</feature>
<feature type="binding site" evidence="1">
    <location>
        <begin position="142"/>
        <end position="144"/>
    </location>
    <ligand>
        <name>substrate</name>
    </ligand>
</feature>
<feature type="binding site" evidence="1">
    <location>
        <begin position="190"/>
        <end position="192"/>
    </location>
    <ligand>
        <name>substrate</name>
    </ligand>
</feature>
<feature type="binding site" evidence="1">
    <location>
        <position position="247"/>
    </location>
    <ligand>
        <name>substrate</name>
    </ligand>
</feature>
<feature type="binding site" evidence="1">
    <location>
        <begin position="297"/>
        <end position="300"/>
    </location>
    <ligand>
        <name>substrate</name>
    </ligand>
</feature>
<feature type="site" description="Important for catalytic activity and substrate specificity; stabilizes the transition state when the phosphoryl donor is PPi; prevents ATP from binding by mimicking the alpha-phosphate group of ATP" evidence="1">
    <location>
        <position position="115"/>
    </location>
</feature>
<feature type="site" description="Important for catalytic activity; stabilizes the transition state when the phosphoryl donor is PPi" evidence="1">
    <location>
        <position position="141"/>
    </location>
</feature>
<evidence type="ECO:0000255" key="1">
    <source>
        <dbReference type="HAMAP-Rule" id="MF_01978"/>
    </source>
</evidence>
<evidence type="ECO:0000269" key="2">
    <source>
    </source>
</evidence>
<name>PFP_METCA</name>
<proteinExistence type="evidence at protein level"/>
<sequence length="420" mass="45308">MAARNAFYAQSGGVTAVINASACGVLETARQYPDRIGTVYAGRNGIVGALTEDLIDTGQESAEAIAALRHTPSGAFGSCRYKLKGLEENRAQYERLIEVFRAHDIGYFFYNGGGDSADTCLKVSQLSEKLGYPLQAVHIPKTVDNDLPITDCCPGFGSVAKYIAVSVREASFDVRSMAATSTCIFVLEVMGRHAGWIAAAGGLASDERHELALVILFPEQVFDPERFLRAVDEKVRSHGYCSVVVSEGIRGADGRFVAESGSRDVFGHARLGGVAPVIADLIKERLGYKYHWAVADYLQRAARHIASRTDVEQAYAVGKAGVEMALKGLSAVMPAIVRTSDSPYRWEITAASLAEVANVEKKMPLEFISADGFGITEACRRYLRPLIEGEDYPPYAGGLPDYVTLCNVAVPKKLAASFSV</sequence>